<keyword id="KW-0416">Keratin</keyword>
<keyword id="KW-1267">Proteomics identification</keyword>
<keyword id="KW-1185">Reference proteome</keyword>
<keyword id="KW-0677">Repeat</keyword>
<evidence type="ECO:0000250" key="1"/>
<gene>
    <name type="primary">KRTAP17-1</name>
    <name type="synonym">KAP17.1</name>
    <name type="synonym">KRTAP16.1</name>
</gene>
<comment type="function">
    <text>In the hair cortex, hair keratin intermediate filaments are embedded in an interfilamentous matrix, consisting of hair keratin-associated proteins (KRTAP), which are essential for the formation of a rigid and resistant hair shaft through their extensive disulfide bond cross-linking with abundant cysteine residues of hair keratins. The matrix proteins include the high-sulfur and high-glycine-tyrosine keratins.</text>
</comment>
<comment type="subunit">
    <text evidence="1">Interacts with hair keratins.</text>
</comment>
<comment type="interaction">
    <interactant intactId="EBI-11988175">
        <id>Q9BYP8</id>
    </interactant>
    <interactant intactId="EBI-744545">
        <id>Q8NEC5</id>
        <label>CATSPER1</label>
    </interactant>
    <organismsDiffer>false</organismsDiffer>
    <experiments>3</experiments>
</comment>
<comment type="interaction">
    <interactant intactId="EBI-11988175">
        <id>Q9BYP8</id>
    </interactant>
    <interactant intactId="EBI-12139335">
        <id>Q8N6W0</id>
        <label>CELF5</label>
    </interactant>
    <organismsDiffer>false</organismsDiffer>
    <experiments>3</experiments>
</comment>
<comment type="interaction">
    <interactant intactId="EBI-11988175">
        <id>Q9BYP8</id>
    </interactant>
    <interactant intactId="EBI-741032">
        <id>Q8NE01</id>
        <label>CNNM3</label>
    </interactant>
    <organismsDiffer>false</organismsDiffer>
    <experiments>5</experiments>
</comment>
<comment type="interaction">
    <interactant intactId="EBI-11988175">
        <id>Q9BYP8</id>
    </interactant>
    <interactant intactId="EBI-448771">
        <id>Q92608</id>
        <label>DOCK2</label>
    </interactant>
    <organismsDiffer>false</organismsDiffer>
    <experiments>3</experiments>
</comment>
<comment type="interaction">
    <interactant intactId="EBI-11988175">
        <id>Q9BYP8</id>
    </interactant>
    <interactant intactId="EBI-7466542">
        <id>P43220</id>
        <label>GLP1R</label>
    </interactant>
    <organismsDiffer>false</organismsDiffer>
    <experiments>3</experiments>
</comment>
<comment type="interaction">
    <interactant intactId="EBI-11988175">
        <id>Q9BYP8</id>
    </interactant>
    <interactant intactId="EBI-11975289">
        <id>Q9Y223-2</id>
        <label>GNE</label>
    </interactant>
    <organismsDiffer>false</organismsDiffer>
    <experiments>3</experiments>
</comment>
<comment type="interaction">
    <interactant intactId="EBI-11988175">
        <id>Q9BYP8</id>
    </interactant>
    <interactant intactId="EBI-745290">
        <id>P17482</id>
        <label>HOXB9</label>
    </interactant>
    <organismsDiffer>false</organismsDiffer>
    <experiments>3</experiments>
</comment>
<comment type="interaction">
    <interactant intactId="EBI-11988175">
        <id>Q9BYP8</id>
    </interactant>
    <interactant intactId="EBI-749311">
        <id>P37235</id>
        <label>HPCAL1</label>
    </interactant>
    <organismsDiffer>false</organismsDiffer>
    <experiments>3</experiments>
</comment>
<comment type="interaction">
    <interactant intactId="EBI-11988175">
        <id>Q9BYP8</id>
    </interactant>
    <interactant intactId="EBI-11051601">
        <id>P16144-2</id>
        <label>ITGB4</label>
    </interactant>
    <organismsDiffer>false</organismsDiffer>
    <experiments>3</experiments>
</comment>
<comment type="interaction">
    <interactant intactId="EBI-11988175">
        <id>Q9BYP8</id>
    </interactant>
    <interactant intactId="EBI-10171774">
        <id>P60410</id>
        <label>KRTAP10-8</label>
    </interactant>
    <organismsDiffer>false</organismsDiffer>
    <experiments>3</experiments>
</comment>
<comment type="interaction">
    <interactant intactId="EBI-11988175">
        <id>Q9BYP8</id>
    </interactant>
    <interactant intactId="EBI-10302392">
        <id>Q9BYQ6</id>
        <label>KRTAP4-11</label>
    </interactant>
    <organismsDiffer>false</organismsDiffer>
    <experiments>5</experiments>
</comment>
<comment type="interaction">
    <interactant intactId="EBI-11988175">
        <id>Q9BYP8</id>
    </interactant>
    <interactant intactId="EBI-11958132">
        <id>Q9BYR3</id>
        <label>KRTAP4-4</label>
    </interactant>
    <organismsDiffer>false</organismsDiffer>
    <experiments>3</experiments>
</comment>
<comment type="interaction">
    <interactant intactId="EBI-11988175">
        <id>Q9BYP8</id>
    </interactant>
    <interactant intactId="EBI-11993296">
        <id>Q6L8G4</id>
        <label>KRTAP5-11</label>
    </interactant>
    <organismsDiffer>false</organismsDiffer>
    <experiments>3</experiments>
</comment>
<comment type="interaction">
    <interactant intactId="EBI-11988175">
        <id>Q9BYP8</id>
    </interactant>
    <interactant intactId="EBI-10250562">
        <id>Q6L8G9</id>
        <label>KRTAP5-6</label>
    </interactant>
    <organismsDiffer>false</organismsDiffer>
    <experiments>5</experiments>
</comment>
<comment type="interaction">
    <interactant intactId="EBI-11988175">
        <id>Q9BYP8</id>
    </interactant>
    <interactant intactId="EBI-1044640">
        <id>Q9BYQ4</id>
        <label>KRTAP9-2</label>
    </interactant>
    <organismsDiffer>false</organismsDiffer>
    <experiments>3</experiments>
</comment>
<comment type="interaction">
    <interactant intactId="EBI-11988175">
        <id>Q9BYP8</id>
    </interactant>
    <interactant intactId="EBI-11958364">
        <id>Q9BYQ0</id>
        <label>KRTAP9-8</label>
    </interactant>
    <organismsDiffer>false</organismsDiffer>
    <experiments>3</experiments>
</comment>
<comment type="interaction">
    <interactant intactId="EBI-11988175">
        <id>Q9BYP8</id>
    </interactant>
    <interactant intactId="EBI-10245913">
        <id>Q5T7P3</id>
        <label>LCE1B</label>
    </interactant>
    <organismsDiffer>false</organismsDiffer>
    <experiments>3</experiments>
</comment>
<comment type="interaction">
    <interactant intactId="EBI-11988175">
        <id>Q9BYP8</id>
    </interactant>
    <interactant intactId="EBI-11955335">
        <id>Q5T753</id>
        <label>LCE1E</label>
    </interactant>
    <organismsDiffer>false</organismsDiffer>
    <experiments>3</experiments>
</comment>
<comment type="interaction">
    <interactant intactId="EBI-11988175">
        <id>Q9BYP8</id>
    </interactant>
    <interactant intactId="EBI-11478468">
        <id>O14633</id>
        <label>LCE2B</label>
    </interactant>
    <organismsDiffer>false</organismsDiffer>
    <experiments>4</experiments>
</comment>
<comment type="interaction">
    <interactant intactId="EBI-11988175">
        <id>Q9BYP8</id>
    </interactant>
    <interactant intactId="EBI-11973993">
        <id>Q5TA81</id>
        <label>LCE2C</label>
    </interactant>
    <organismsDiffer>false</organismsDiffer>
    <experiments>3</experiments>
</comment>
<comment type="interaction">
    <interactant intactId="EBI-11988175">
        <id>Q9BYP8</id>
    </interactant>
    <interactant intactId="EBI-10246750">
        <id>Q5TA82</id>
        <label>LCE2D</label>
    </interactant>
    <organismsDiffer>false</organismsDiffer>
    <experiments>3</experiments>
</comment>
<comment type="interaction">
    <interactant intactId="EBI-11988175">
        <id>Q9BYP8</id>
    </interactant>
    <interactant intactId="EBI-9394625">
        <id>Q5TA76</id>
        <label>LCE3A</label>
    </interactant>
    <organismsDiffer>false</organismsDiffer>
    <experiments>5</experiments>
</comment>
<comment type="interaction">
    <interactant intactId="EBI-11988175">
        <id>Q9BYP8</id>
    </interactant>
    <interactant intactId="EBI-10245291">
        <id>Q5T5A8</id>
        <label>LCE3C</label>
    </interactant>
    <organismsDiffer>false</organismsDiffer>
    <experiments>5</experiments>
</comment>
<comment type="interaction">
    <interactant intactId="EBI-11988175">
        <id>Q9BYP8</id>
    </interactant>
    <interactant intactId="EBI-6658837">
        <id>Q9BYE3</id>
        <label>LCE3D</label>
    </interactant>
    <organismsDiffer>false</organismsDiffer>
    <experiments>3</experiments>
</comment>
<comment type="interaction">
    <interactant intactId="EBI-11988175">
        <id>Q9BYP8</id>
    </interactant>
    <interactant intactId="EBI-10246358">
        <id>Q5TA78</id>
        <label>LCE4A</label>
    </interactant>
    <organismsDiffer>false</organismsDiffer>
    <experiments>3</experiments>
</comment>
<comment type="interaction">
    <interactant intactId="EBI-11988175">
        <id>Q9BYP8</id>
    </interactant>
    <interactant intactId="EBI-399076">
        <id>Q9NV56</id>
        <label>MRGBP</label>
    </interactant>
    <organismsDiffer>false</organismsDiffer>
    <experiments>3</experiments>
</comment>
<comment type="interaction">
    <interactant intactId="EBI-11988175">
        <id>Q9BYP8</id>
    </interactant>
    <interactant intactId="EBI-12015462">
        <id>P07438</id>
        <label>MT1B</label>
    </interactant>
    <organismsDiffer>false</organismsDiffer>
    <experiments>3</experiments>
</comment>
<comment type="interaction">
    <interactant intactId="EBI-11988175">
        <id>Q9BYP8</id>
    </interactant>
    <interactant intactId="EBI-3911571">
        <id>Q8N339</id>
        <label>MT1M</label>
    </interactant>
    <organismsDiffer>false</organismsDiffer>
    <experiments>3</experiments>
</comment>
<comment type="interaction">
    <interactant intactId="EBI-11988175">
        <id>Q9BYP8</id>
    </interactant>
    <interactant intactId="EBI-10210351">
        <id>P48645</id>
        <label>NMU</label>
    </interactant>
    <organismsDiffer>false</organismsDiffer>
    <experiments>5</experiments>
</comment>
<comment type="interaction">
    <interactant intactId="EBI-11988175">
        <id>Q9BYP8</id>
    </interactant>
    <interactant intactId="EBI-740446">
        <id>P32242</id>
        <label>OTX1</label>
    </interactant>
    <organismsDiffer>false</organismsDiffer>
    <experiments>3</experiments>
</comment>
<comment type="interaction">
    <interactant intactId="EBI-11988175">
        <id>Q9BYP8</id>
    </interactant>
    <interactant intactId="EBI-1053424">
        <id>O43741</id>
        <label>PRKAB2</label>
    </interactant>
    <organismsDiffer>false</organismsDiffer>
    <experiments>3</experiments>
</comment>
<comment type="interaction">
    <interactant intactId="EBI-11988175">
        <id>Q9BYP8</id>
    </interactant>
    <interactant intactId="EBI-9681663">
        <id>P04554</id>
        <label>PRM2</label>
    </interactant>
    <organismsDiffer>false</organismsDiffer>
    <experiments>3</experiments>
</comment>
<comment type="interaction">
    <interactant intactId="EBI-11988175">
        <id>Q9BYP8</id>
    </interactant>
    <interactant intactId="EBI-11955083">
        <id>Q9NUL5-4</id>
        <label>SHFL</label>
    </interactant>
    <organismsDiffer>false</organismsDiffer>
    <experiments>3</experiments>
</comment>
<comment type="interaction">
    <interactant intactId="EBI-11988175">
        <id>Q9BYP8</id>
    </interactant>
    <interactant intactId="EBI-11960469">
        <id>P0CI01</id>
        <label>SPDYE6</label>
    </interactant>
    <organismsDiffer>false</organismsDiffer>
    <experiments>3</experiments>
</comment>
<comment type="interaction">
    <interactant intactId="EBI-11988175">
        <id>Q9BYP8</id>
    </interactant>
    <interactant intactId="EBI-741350">
        <id>Q9BT49</id>
        <label>THAP7</label>
    </interactant>
    <organismsDiffer>false</organismsDiffer>
    <experiments>3</experiments>
</comment>
<comment type="interaction">
    <interactant intactId="EBI-11988175">
        <id>Q9BYP8</id>
    </interactant>
    <interactant intactId="EBI-11741437">
        <id>Q08117-2</id>
        <label>TLE5</label>
    </interactant>
    <organismsDiffer>false</organismsDiffer>
    <experiments>3</experiments>
</comment>
<comment type="interaction">
    <interactant intactId="EBI-11988175">
        <id>Q9BYP8</id>
    </interactant>
    <interactant intactId="EBI-10249550">
        <id>Q6EMK4</id>
        <label>VASN</label>
    </interactant>
    <organismsDiffer>false</organismsDiffer>
    <experiments>3</experiments>
</comment>
<comment type="interaction">
    <interactant intactId="EBI-11988175">
        <id>Q9BYP8</id>
    </interactant>
    <interactant intactId="EBI-8058160">
        <id>O96014</id>
        <label>WNT11</label>
    </interactant>
    <organismsDiffer>false</organismsDiffer>
    <experiments>5</experiments>
</comment>
<comment type="interaction">
    <interactant intactId="EBI-11988175">
        <id>Q9BYP8</id>
    </interactant>
    <interactant intactId="EBI-765538">
        <id>P25490</id>
        <label>YY1</label>
    </interactant>
    <organismsDiffer>false</organismsDiffer>
    <experiments>3</experiments>
</comment>
<comment type="interaction">
    <interactant intactId="EBI-11988175">
        <id>Q9BYP8</id>
    </interactant>
    <interactant intactId="EBI-739899">
        <id>P24278</id>
        <label>ZBTB25</label>
    </interactant>
    <organismsDiffer>false</organismsDiffer>
    <experiments>3</experiments>
</comment>
<comment type="interaction">
    <interactant intactId="EBI-11988175">
        <id>Q9BYP8</id>
    </interactant>
    <interactant intactId="EBI-2818796">
        <id>Q8WTX9</id>
        <label>ZDHHC1</label>
    </interactant>
    <organismsDiffer>false</organismsDiffer>
    <experiments>3</experiments>
</comment>
<comment type="interaction">
    <interactant intactId="EBI-11988175">
        <id>Q9BYP8</id>
    </interactant>
    <interactant intactId="EBI-5278328">
        <id>Q8IZC7</id>
        <label>ZNF101</label>
    </interactant>
    <organismsDiffer>false</organismsDiffer>
    <experiments>3</experiments>
</comment>
<comment type="interaction">
    <interactant intactId="EBI-11988175">
        <id>Q9BYP8</id>
    </interactant>
    <interactant intactId="EBI-14069183">
        <id>Q86XF7</id>
        <label>ZNF575</label>
    </interactant>
    <organismsDiffer>false</organismsDiffer>
    <experiments>3</experiments>
</comment>
<comment type="interaction">
    <interactant intactId="EBI-11988175">
        <id>Q9BYP8</id>
    </interactant>
    <interactant intactId="EBI-11955189">
        <id>Q96N58</id>
        <label>ZNF578</label>
    </interactant>
    <organismsDiffer>false</organismsDiffer>
    <experiments>3</experiments>
</comment>
<comment type="interaction">
    <interactant intactId="EBI-11988175">
        <id>Q9BYP8</id>
    </interactant>
    <interactant intactId="EBI-11090299">
        <id>Q9H7X3</id>
        <label>ZNF696</label>
    </interactant>
    <organismsDiffer>false</organismsDiffer>
    <experiments>3</experiments>
</comment>
<reference key="1">
    <citation type="journal article" date="2001" name="J. Biol. Chem.">
        <title>Characterization of a cluster of human high/ultrahigh sulfur keratin-associated protein genes embedded in the type I keratin gene domain on chromosome 17q12-21.</title>
        <authorList>
            <person name="Rogers M.A."/>
            <person name="Langbein L."/>
            <person name="Winter H."/>
            <person name="Ehmann C."/>
            <person name="Praetzel S."/>
            <person name="Korn B."/>
            <person name="Schweizer J."/>
        </authorList>
    </citation>
    <scope>NUCLEOTIDE SEQUENCE [MRNA]</scope>
    <source>
        <tissue>Scalp</tissue>
    </source>
</reference>
<reference key="2">
    <citation type="journal article" date="2004" name="Genome Res.">
        <title>The status, quality, and expansion of the NIH full-length cDNA project: the Mammalian Gene Collection (MGC).</title>
        <authorList>
            <consortium name="The MGC Project Team"/>
        </authorList>
    </citation>
    <scope>NUCLEOTIDE SEQUENCE [LARGE SCALE MRNA]</scope>
</reference>
<organism>
    <name type="scientific">Homo sapiens</name>
    <name type="common">Human</name>
    <dbReference type="NCBI Taxonomy" id="9606"/>
    <lineage>
        <taxon>Eukaryota</taxon>
        <taxon>Metazoa</taxon>
        <taxon>Chordata</taxon>
        <taxon>Craniata</taxon>
        <taxon>Vertebrata</taxon>
        <taxon>Euteleostomi</taxon>
        <taxon>Mammalia</taxon>
        <taxon>Eutheria</taxon>
        <taxon>Euarchontoglires</taxon>
        <taxon>Primates</taxon>
        <taxon>Haplorrhini</taxon>
        <taxon>Catarrhini</taxon>
        <taxon>Hominidae</taxon>
        <taxon>Homo</taxon>
    </lineage>
</organism>
<sequence>MGCCPGDCFTCCTQEQNCCEECCCQPGCCGCCGSCCGCGGSGCGGSGCGGSCCGSSCCGSGCGGCGGCGGCGGGCCGSSCCGSSCCGSGCCGPVCCQPTPICDTK</sequence>
<protein>
    <recommendedName>
        <fullName>Keratin-associated protein 17-1</fullName>
    </recommendedName>
    <alternativeName>
        <fullName>Keratin-associated protein 16.1</fullName>
    </alternativeName>
</protein>
<name>KR171_HUMAN</name>
<accession>Q9BYP8</accession>
<feature type="chain" id="PRO_0000223903" description="Keratin-associated protein 17-1">
    <location>
        <begin position="1"/>
        <end position="105"/>
    </location>
</feature>
<proteinExistence type="evidence at protein level"/>
<dbReference type="EMBL" id="AJ406952">
    <property type="protein sequence ID" value="CAC27591.1"/>
    <property type="molecule type" value="mRNA"/>
</dbReference>
<dbReference type="EMBL" id="BC069297">
    <property type="protein sequence ID" value="AAH69297.1"/>
    <property type="molecule type" value="mRNA"/>
</dbReference>
<dbReference type="EMBL" id="BC069078">
    <property type="protein sequence ID" value="AAH69078.1"/>
    <property type="molecule type" value="mRNA"/>
</dbReference>
<dbReference type="CCDS" id="CCDS11387.1"/>
<dbReference type="RefSeq" id="NP_114170.1">
    <property type="nucleotide sequence ID" value="NM_031964.2"/>
</dbReference>
<dbReference type="BioGRID" id="123813">
    <property type="interactions" value="47"/>
</dbReference>
<dbReference type="FunCoup" id="Q9BYP8">
    <property type="interactions" value="26"/>
</dbReference>
<dbReference type="IntAct" id="Q9BYP8">
    <property type="interactions" value="45"/>
</dbReference>
<dbReference type="STRING" id="9606.ENSP00000333993"/>
<dbReference type="BioMuta" id="KRTAP17-1"/>
<dbReference type="PaxDb" id="9606-ENSP00000333993"/>
<dbReference type="PeptideAtlas" id="Q9BYP8"/>
<dbReference type="DNASU" id="83902"/>
<dbReference type="Ensembl" id="ENST00000334202.5">
    <property type="protein sequence ID" value="ENSP00000333993.3"/>
    <property type="gene ID" value="ENSG00000186860.5"/>
</dbReference>
<dbReference type="Ensembl" id="ENST00000574858.1">
    <property type="protein sequence ID" value="ENSP00000460320.1"/>
    <property type="gene ID" value="ENSG00000263341.1"/>
</dbReference>
<dbReference type="Ensembl" id="ENST00000709587.1">
    <property type="protein sequence ID" value="ENSP00000517781.1"/>
    <property type="gene ID" value="ENSG00000292024.1"/>
</dbReference>
<dbReference type="GeneID" id="83902"/>
<dbReference type="KEGG" id="hsa:83902"/>
<dbReference type="MANE-Select" id="ENST00000334202.5">
    <property type="protein sequence ID" value="ENSP00000333993.3"/>
    <property type="RefSeq nucleotide sequence ID" value="NM_031964.2"/>
    <property type="RefSeq protein sequence ID" value="NP_114170.1"/>
</dbReference>
<dbReference type="UCSC" id="uc002hwj.3">
    <property type="organism name" value="human"/>
</dbReference>
<dbReference type="AGR" id="HGNC:18917"/>
<dbReference type="CTD" id="83902"/>
<dbReference type="DisGeNET" id="83902"/>
<dbReference type="GeneCards" id="KRTAP17-1"/>
<dbReference type="HGNC" id="HGNC:18917">
    <property type="gene designation" value="KRTAP17-1"/>
</dbReference>
<dbReference type="HPA" id="ENSG00000186860">
    <property type="expression patterns" value="Tissue enriched (skin)"/>
</dbReference>
<dbReference type="neXtProt" id="NX_Q9BYP8"/>
<dbReference type="OpenTargets" id="ENSG00000186860"/>
<dbReference type="PharmGKB" id="PA38763"/>
<dbReference type="VEuPathDB" id="HostDB:ENSG00000186860"/>
<dbReference type="eggNOG" id="KOG4726">
    <property type="taxonomic scope" value="Eukaryota"/>
</dbReference>
<dbReference type="GeneTree" id="ENSGT00950000183407"/>
<dbReference type="HOGENOM" id="CLU_173435_0_0_1"/>
<dbReference type="InParanoid" id="Q9BYP8"/>
<dbReference type="OMA" id="QEQDCCE"/>
<dbReference type="PAN-GO" id="Q9BYP8">
    <property type="GO annotations" value="0 GO annotations based on evolutionary models"/>
</dbReference>
<dbReference type="PathwayCommons" id="Q9BYP8"/>
<dbReference type="Reactome" id="R-HSA-6805567">
    <property type="pathway name" value="Keratinization"/>
</dbReference>
<dbReference type="SignaLink" id="Q9BYP8"/>
<dbReference type="BioGRID-ORCS" id="83902">
    <property type="hits" value="13 hits in 1129 CRISPR screens"/>
</dbReference>
<dbReference type="GenomeRNAi" id="83902"/>
<dbReference type="Pharos" id="Q9BYP8">
    <property type="development level" value="Tdark"/>
</dbReference>
<dbReference type="PRO" id="PR:Q9BYP8"/>
<dbReference type="Proteomes" id="UP000005640">
    <property type="component" value="Chromosome 17"/>
</dbReference>
<dbReference type="RNAct" id="Q9BYP8">
    <property type="molecule type" value="protein"/>
</dbReference>
<dbReference type="Bgee" id="ENSG00000186860">
    <property type="expression patterns" value="Expressed in primordial germ cell in gonad and 22 other cell types or tissues"/>
</dbReference>
<dbReference type="GO" id="GO:0005829">
    <property type="term" value="C:cytosol"/>
    <property type="evidence" value="ECO:0000304"/>
    <property type="project" value="Reactome"/>
</dbReference>
<dbReference type="GO" id="GO:0005882">
    <property type="term" value="C:intermediate filament"/>
    <property type="evidence" value="ECO:0007669"/>
    <property type="project" value="UniProtKB-KW"/>
</dbReference>